<dbReference type="EC" id="2.4.1.21" evidence="1"/>
<dbReference type="EMBL" id="CP000117">
    <property type="protein sequence ID" value="ABA24372.1"/>
    <property type="molecule type" value="Genomic_DNA"/>
</dbReference>
<dbReference type="SMR" id="Q3M3R4"/>
<dbReference type="STRING" id="240292.Ava_4775"/>
<dbReference type="CAZy" id="GT5">
    <property type="family name" value="Glycosyltransferase Family 5"/>
</dbReference>
<dbReference type="KEGG" id="ava:Ava_4775"/>
<dbReference type="eggNOG" id="COG0297">
    <property type="taxonomic scope" value="Bacteria"/>
</dbReference>
<dbReference type="HOGENOM" id="CLU_009583_18_2_3"/>
<dbReference type="UniPathway" id="UPA00164"/>
<dbReference type="Proteomes" id="UP000002533">
    <property type="component" value="Chromosome"/>
</dbReference>
<dbReference type="GO" id="GO:0009011">
    <property type="term" value="F:alpha-1,4-glucan glucosyltransferase (ADP-glucose donor) activity"/>
    <property type="evidence" value="ECO:0007669"/>
    <property type="project" value="UniProtKB-UniRule"/>
</dbReference>
<dbReference type="GO" id="GO:0004373">
    <property type="term" value="F:alpha-1,4-glucan glucosyltransferase (UDP-glucose donor) activity"/>
    <property type="evidence" value="ECO:0007669"/>
    <property type="project" value="InterPro"/>
</dbReference>
<dbReference type="GO" id="GO:0005978">
    <property type="term" value="P:glycogen biosynthetic process"/>
    <property type="evidence" value="ECO:0007669"/>
    <property type="project" value="UniProtKB-UniRule"/>
</dbReference>
<dbReference type="CDD" id="cd03791">
    <property type="entry name" value="GT5_Glycogen_synthase_DULL1-like"/>
    <property type="match status" value="1"/>
</dbReference>
<dbReference type="Gene3D" id="3.40.50.2000">
    <property type="entry name" value="Glycogen Phosphorylase B"/>
    <property type="match status" value="2"/>
</dbReference>
<dbReference type="HAMAP" id="MF_00484">
    <property type="entry name" value="Glycogen_synth"/>
    <property type="match status" value="1"/>
</dbReference>
<dbReference type="InterPro" id="IPR001296">
    <property type="entry name" value="Glyco_trans_1"/>
</dbReference>
<dbReference type="InterPro" id="IPR011835">
    <property type="entry name" value="GS/SS"/>
</dbReference>
<dbReference type="InterPro" id="IPR013534">
    <property type="entry name" value="Starch_synth_cat_dom"/>
</dbReference>
<dbReference type="NCBIfam" id="TIGR02095">
    <property type="entry name" value="glgA"/>
    <property type="match status" value="1"/>
</dbReference>
<dbReference type="NCBIfam" id="NF001900">
    <property type="entry name" value="PRK00654.1-3"/>
    <property type="match status" value="1"/>
</dbReference>
<dbReference type="PANTHER" id="PTHR45825:SF11">
    <property type="entry name" value="ALPHA AMYLASE DOMAIN-CONTAINING PROTEIN"/>
    <property type="match status" value="1"/>
</dbReference>
<dbReference type="PANTHER" id="PTHR45825">
    <property type="entry name" value="GRANULE-BOUND STARCH SYNTHASE 1, CHLOROPLASTIC/AMYLOPLASTIC"/>
    <property type="match status" value="1"/>
</dbReference>
<dbReference type="Pfam" id="PF08323">
    <property type="entry name" value="Glyco_transf_5"/>
    <property type="match status" value="1"/>
</dbReference>
<dbReference type="Pfam" id="PF00534">
    <property type="entry name" value="Glycos_transf_1"/>
    <property type="match status" value="1"/>
</dbReference>
<dbReference type="SUPFAM" id="SSF53756">
    <property type="entry name" value="UDP-Glycosyltransferase/glycogen phosphorylase"/>
    <property type="match status" value="1"/>
</dbReference>
<name>GLGA2_TRIV2</name>
<reference key="1">
    <citation type="journal article" date="2014" name="Stand. Genomic Sci.">
        <title>Complete genome sequence of Anabaena variabilis ATCC 29413.</title>
        <authorList>
            <person name="Thiel T."/>
            <person name="Pratte B.S."/>
            <person name="Zhong J."/>
            <person name="Goodwin L."/>
            <person name="Copeland A."/>
            <person name="Lucas S."/>
            <person name="Han C."/>
            <person name="Pitluck S."/>
            <person name="Land M.L."/>
            <person name="Kyrpides N.C."/>
            <person name="Woyke T."/>
        </authorList>
    </citation>
    <scope>NUCLEOTIDE SEQUENCE [LARGE SCALE GENOMIC DNA]</scope>
    <source>
        <strain>ATCC 29413 / PCC 7937</strain>
    </source>
</reference>
<sequence>MRILFVAAEAAPIAKVGGMGDVVGALPKVLRKMGHDVRIFLPYYGFLPDKMEIPKDPIWKGYAMFQDFTVHEAVLPGTDVPLYLFGHPAFNPRRIYSGDDEDWRFTLFSNGAAEFCWNYWKPEIIHCHDWHTGMIPVWMNQSPDITTVFTIHNLAYQGPWRWYLDKITWCPWYMQGHNTMAAAVQFADRVNTVSPTYAEQIKTPAYGEKIEGLLSFISGKLSGIVNGIDTEVYDPANDKFIAQTFTADTLDKRKANKIALQEEVGLEVNSNAFLIGMVTRLVEQKGLDLVIQMLDRFMAYTDAQFVLLGTGDRYYETQMWQLASRYPGRMATYLLYNDALSRRIYAGSDAFLMPSRFEPCGISQMMALRYGSIPIVRRTGGLVDTVSHHDPVNEAGTGYCFDRYEPLDLFTCMIRAWEGFRYKPQWQELQKRGMSQDFSWYKSAKEYDRLYRSIYGLPEAEETQPELILANQ</sequence>
<evidence type="ECO:0000255" key="1">
    <source>
        <dbReference type="HAMAP-Rule" id="MF_00484"/>
    </source>
</evidence>
<accession>Q3M3R4</accession>
<proteinExistence type="inferred from homology"/>
<protein>
    <recommendedName>
        <fullName evidence="1">Glycogen synthase 2</fullName>
        <ecNumber evidence="1">2.4.1.21</ecNumber>
    </recommendedName>
    <alternativeName>
        <fullName evidence="1">Starch [bacterial glycogen] synthase 2</fullName>
    </alternativeName>
</protein>
<feature type="chain" id="PRO_0000230233" description="Glycogen synthase 2">
    <location>
        <begin position="1"/>
        <end position="472"/>
    </location>
</feature>
<feature type="binding site" evidence="1">
    <location>
        <position position="15"/>
    </location>
    <ligand>
        <name>ADP-alpha-D-glucose</name>
        <dbReference type="ChEBI" id="CHEBI:57498"/>
    </ligand>
</feature>
<organism>
    <name type="scientific">Trichormus variabilis (strain ATCC 29413 / PCC 7937)</name>
    <name type="common">Anabaena variabilis</name>
    <dbReference type="NCBI Taxonomy" id="240292"/>
    <lineage>
        <taxon>Bacteria</taxon>
        <taxon>Bacillati</taxon>
        <taxon>Cyanobacteriota</taxon>
        <taxon>Cyanophyceae</taxon>
        <taxon>Nostocales</taxon>
        <taxon>Nostocaceae</taxon>
        <taxon>Trichormus</taxon>
    </lineage>
</organism>
<gene>
    <name evidence="1" type="primary">glgA2</name>
    <name type="ordered locus">Ava_4775</name>
</gene>
<keyword id="KW-0320">Glycogen biosynthesis</keyword>
<keyword id="KW-0328">Glycosyltransferase</keyword>
<keyword id="KW-0808">Transferase</keyword>
<comment type="function">
    <text evidence="1">Synthesizes alpha-1,4-glucan chains using ADP-glucose.</text>
</comment>
<comment type="catalytic activity">
    <reaction evidence="1">
        <text>[(1-&gt;4)-alpha-D-glucosyl](n) + ADP-alpha-D-glucose = [(1-&gt;4)-alpha-D-glucosyl](n+1) + ADP + H(+)</text>
        <dbReference type="Rhea" id="RHEA:18189"/>
        <dbReference type="Rhea" id="RHEA-COMP:9584"/>
        <dbReference type="Rhea" id="RHEA-COMP:9587"/>
        <dbReference type="ChEBI" id="CHEBI:15378"/>
        <dbReference type="ChEBI" id="CHEBI:15444"/>
        <dbReference type="ChEBI" id="CHEBI:57498"/>
        <dbReference type="ChEBI" id="CHEBI:456216"/>
        <dbReference type="EC" id="2.4.1.21"/>
    </reaction>
</comment>
<comment type="pathway">
    <text evidence="1">Glycan biosynthesis; glycogen biosynthesis.</text>
</comment>
<comment type="similarity">
    <text evidence="1">Belongs to the glycosyltransferase 1 family. Bacterial/plant glycogen synthase subfamily.</text>
</comment>